<sequence length="137" mass="15652">MLQPKRTKFRKMQKGRIRGEAKGGSDLTFGTYGLKALQPERVTARQIEAARRAMTRHMKRQGRVWIRIFPDTPVTSKPVEVRMGKGKGSVDFWACKVKPGRVMFEIDGVSEPIAREALRLAAMKLPVKTRTVVREDW</sequence>
<protein>
    <recommendedName>
        <fullName evidence="1">Large ribosomal subunit protein uL16</fullName>
    </recommendedName>
    <alternativeName>
        <fullName evidence="3">50S ribosomal protein L16</fullName>
    </alternativeName>
</protein>
<name>RL16_JANSC</name>
<feature type="chain" id="PRO_0000251640" description="Large ribosomal subunit protein uL16">
    <location>
        <begin position="1"/>
        <end position="137"/>
    </location>
</feature>
<feature type="region of interest" description="Disordered" evidence="2">
    <location>
        <begin position="1"/>
        <end position="22"/>
    </location>
</feature>
<feature type="compositionally biased region" description="Basic residues" evidence="2">
    <location>
        <begin position="1"/>
        <end position="16"/>
    </location>
</feature>
<keyword id="KW-1185">Reference proteome</keyword>
<keyword id="KW-0687">Ribonucleoprotein</keyword>
<keyword id="KW-0689">Ribosomal protein</keyword>
<keyword id="KW-0694">RNA-binding</keyword>
<keyword id="KW-0699">rRNA-binding</keyword>
<keyword id="KW-0820">tRNA-binding</keyword>
<accession>Q28UV3</accession>
<proteinExistence type="inferred from homology"/>
<organism>
    <name type="scientific">Jannaschia sp. (strain CCS1)</name>
    <dbReference type="NCBI Taxonomy" id="290400"/>
    <lineage>
        <taxon>Bacteria</taxon>
        <taxon>Pseudomonadati</taxon>
        <taxon>Pseudomonadota</taxon>
        <taxon>Alphaproteobacteria</taxon>
        <taxon>Rhodobacterales</taxon>
        <taxon>Roseobacteraceae</taxon>
        <taxon>Jannaschia</taxon>
    </lineage>
</organism>
<evidence type="ECO:0000255" key="1">
    <source>
        <dbReference type="HAMAP-Rule" id="MF_01342"/>
    </source>
</evidence>
<evidence type="ECO:0000256" key="2">
    <source>
        <dbReference type="SAM" id="MobiDB-lite"/>
    </source>
</evidence>
<evidence type="ECO:0000305" key="3"/>
<reference key="1">
    <citation type="submission" date="2006-02" db="EMBL/GenBank/DDBJ databases">
        <title>Complete sequence of chromosome of Jannaschia sp. CCS1.</title>
        <authorList>
            <consortium name="US DOE Joint Genome Institute"/>
            <person name="Copeland A."/>
            <person name="Lucas S."/>
            <person name="Lapidus A."/>
            <person name="Barry K."/>
            <person name="Detter J.C."/>
            <person name="Glavina del Rio T."/>
            <person name="Hammon N."/>
            <person name="Israni S."/>
            <person name="Pitluck S."/>
            <person name="Brettin T."/>
            <person name="Bruce D."/>
            <person name="Han C."/>
            <person name="Tapia R."/>
            <person name="Gilna P."/>
            <person name="Chertkov O."/>
            <person name="Saunders E."/>
            <person name="Schmutz J."/>
            <person name="Larimer F."/>
            <person name="Land M."/>
            <person name="Kyrpides N."/>
            <person name="Lykidis A."/>
            <person name="Moran M.A."/>
            <person name="Belas R."/>
            <person name="Ye W."/>
            <person name="Buchan A."/>
            <person name="Gonzalez J.M."/>
            <person name="Schell M.A."/>
            <person name="Richardson P."/>
        </authorList>
    </citation>
    <scope>NUCLEOTIDE SEQUENCE [LARGE SCALE GENOMIC DNA]</scope>
    <source>
        <strain>CCS1</strain>
    </source>
</reference>
<dbReference type="EMBL" id="CP000264">
    <property type="protein sequence ID" value="ABD53509.1"/>
    <property type="molecule type" value="Genomic_DNA"/>
</dbReference>
<dbReference type="RefSeq" id="WP_011453717.1">
    <property type="nucleotide sequence ID" value="NC_007802.1"/>
</dbReference>
<dbReference type="SMR" id="Q28UV3"/>
<dbReference type="STRING" id="290400.Jann_0592"/>
<dbReference type="KEGG" id="jan:Jann_0592"/>
<dbReference type="eggNOG" id="COG0197">
    <property type="taxonomic scope" value="Bacteria"/>
</dbReference>
<dbReference type="HOGENOM" id="CLU_078858_2_1_5"/>
<dbReference type="OrthoDB" id="9802589at2"/>
<dbReference type="Proteomes" id="UP000008326">
    <property type="component" value="Chromosome"/>
</dbReference>
<dbReference type="GO" id="GO:0022625">
    <property type="term" value="C:cytosolic large ribosomal subunit"/>
    <property type="evidence" value="ECO:0007669"/>
    <property type="project" value="TreeGrafter"/>
</dbReference>
<dbReference type="GO" id="GO:0019843">
    <property type="term" value="F:rRNA binding"/>
    <property type="evidence" value="ECO:0007669"/>
    <property type="project" value="UniProtKB-UniRule"/>
</dbReference>
<dbReference type="GO" id="GO:0003735">
    <property type="term" value="F:structural constituent of ribosome"/>
    <property type="evidence" value="ECO:0007669"/>
    <property type="project" value="InterPro"/>
</dbReference>
<dbReference type="GO" id="GO:0000049">
    <property type="term" value="F:tRNA binding"/>
    <property type="evidence" value="ECO:0007669"/>
    <property type="project" value="UniProtKB-KW"/>
</dbReference>
<dbReference type="GO" id="GO:0006412">
    <property type="term" value="P:translation"/>
    <property type="evidence" value="ECO:0007669"/>
    <property type="project" value="UniProtKB-UniRule"/>
</dbReference>
<dbReference type="CDD" id="cd01433">
    <property type="entry name" value="Ribosomal_L16_L10e"/>
    <property type="match status" value="1"/>
</dbReference>
<dbReference type="FunFam" id="3.90.1170.10:FF:000001">
    <property type="entry name" value="50S ribosomal protein L16"/>
    <property type="match status" value="1"/>
</dbReference>
<dbReference type="Gene3D" id="3.90.1170.10">
    <property type="entry name" value="Ribosomal protein L10e/L16"/>
    <property type="match status" value="1"/>
</dbReference>
<dbReference type="HAMAP" id="MF_01342">
    <property type="entry name" value="Ribosomal_uL16"/>
    <property type="match status" value="1"/>
</dbReference>
<dbReference type="InterPro" id="IPR047873">
    <property type="entry name" value="Ribosomal_uL16"/>
</dbReference>
<dbReference type="InterPro" id="IPR000114">
    <property type="entry name" value="Ribosomal_uL16_bact-type"/>
</dbReference>
<dbReference type="InterPro" id="IPR020798">
    <property type="entry name" value="Ribosomal_uL16_CS"/>
</dbReference>
<dbReference type="InterPro" id="IPR016180">
    <property type="entry name" value="Ribosomal_uL16_dom"/>
</dbReference>
<dbReference type="InterPro" id="IPR036920">
    <property type="entry name" value="Ribosomal_uL16_sf"/>
</dbReference>
<dbReference type="NCBIfam" id="TIGR01164">
    <property type="entry name" value="rplP_bact"/>
    <property type="match status" value="1"/>
</dbReference>
<dbReference type="PANTHER" id="PTHR12220">
    <property type="entry name" value="50S/60S RIBOSOMAL PROTEIN L16"/>
    <property type="match status" value="1"/>
</dbReference>
<dbReference type="PANTHER" id="PTHR12220:SF13">
    <property type="entry name" value="LARGE RIBOSOMAL SUBUNIT PROTEIN UL16M"/>
    <property type="match status" value="1"/>
</dbReference>
<dbReference type="Pfam" id="PF00252">
    <property type="entry name" value="Ribosomal_L16"/>
    <property type="match status" value="1"/>
</dbReference>
<dbReference type="PRINTS" id="PR00060">
    <property type="entry name" value="RIBOSOMALL16"/>
</dbReference>
<dbReference type="SUPFAM" id="SSF54686">
    <property type="entry name" value="Ribosomal protein L16p/L10e"/>
    <property type="match status" value="1"/>
</dbReference>
<dbReference type="PROSITE" id="PS00586">
    <property type="entry name" value="RIBOSOMAL_L16_1"/>
    <property type="match status" value="1"/>
</dbReference>
<dbReference type="PROSITE" id="PS00701">
    <property type="entry name" value="RIBOSOMAL_L16_2"/>
    <property type="match status" value="1"/>
</dbReference>
<gene>
    <name evidence="1" type="primary">rplP</name>
    <name type="ordered locus">Jann_0592</name>
</gene>
<comment type="function">
    <text evidence="1">Binds 23S rRNA and is also seen to make contacts with the A and possibly P site tRNAs.</text>
</comment>
<comment type="subunit">
    <text evidence="1">Part of the 50S ribosomal subunit.</text>
</comment>
<comment type="similarity">
    <text evidence="1">Belongs to the universal ribosomal protein uL16 family.</text>
</comment>